<gene>
    <name evidence="1" type="primary">tmk</name>
    <name type="ordered locus">PSPTO_3827</name>
</gene>
<feature type="chain" id="PRO_0000155325" description="Thymidylate kinase">
    <location>
        <begin position="1"/>
        <end position="210"/>
    </location>
</feature>
<feature type="binding site" evidence="1">
    <location>
        <begin position="10"/>
        <end position="17"/>
    </location>
    <ligand>
        <name>ATP</name>
        <dbReference type="ChEBI" id="CHEBI:30616"/>
    </ligand>
</feature>
<evidence type="ECO:0000255" key="1">
    <source>
        <dbReference type="HAMAP-Rule" id="MF_00165"/>
    </source>
</evidence>
<reference key="1">
    <citation type="journal article" date="2003" name="Proc. Natl. Acad. Sci. U.S.A.">
        <title>The complete genome sequence of the Arabidopsis and tomato pathogen Pseudomonas syringae pv. tomato DC3000.</title>
        <authorList>
            <person name="Buell C.R."/>
            <person name="Joardar V."/>
            <person name="Lindeberg M."/>
            <person name="Selengut J."/>
            <person name="Paulsen I.T."/>
            <person name="Gwinn M.L."/>
            <person name="Dodson R.J."/>
            <person name="DeBoy R.T."/>
            <person name="Durkin A.S."/>
            <person name="Kolonay J.F."/>
            <person name="Madupu R."/>
            <person name="Daugherty S.C."/>
            <person name="Brinkac L.M."/>
            <person name="Beanan M.J."/>
            <person name="Haft D.H."/>
            <person name="Nelson W.C."/>
            <person name="Davidsen T.M."/>
            <person name="Zafar N."/>
            <person name="Zhou L."/>
            <person name="Liu J."/>
            <person name="Yuan Q."/>
            <person name="Khouri H.M."/>
            <person name="Fedorova N.B."/>
            <person name="Tran B."/>
            <person name="Russell D."/>
            <person name="Berry K.J."/>
            <person name="Utterback T.R."/>
            <person name="Van Aken S.E."/>
            <person name="Feldblyum T.V."/>
            <person name="D'Ascenzo M."/>
            <person name="Deng W.-L."/>
            <person name="Ramos A.R."/>
            <person name="Alfano J.R."/>
            <person name="Cartinhour S."/>
            <person name="Chatterjee A.K."/>
            <person name="Delaney T.P."/>
            <person name="Lazarowitz S.G."/>
            <person name="Martin G.B."/>
            <person name="Schneider D.J."/>
            <person name="Tang X."/>
            <person name="Bender C.L."/>
            <person name="White O."/>
            <person name="Fraser C.M."/>
            <person name="Collmer A."/>
        </authorList>
    </citation>
    <scope>NUCLEOTIDE SEQUENCE [LARGE SCALE GENOMIC DNA]</scope>
    <source>
        <strain>ATCC BAA-871 / DC3000</strain>
    </source>
</reference>
<proteinExistence type="inferred from homology"/>
<accession>Q87YH1</accession>
<keyword id="KW-0067">ATP-binding</keyword>
<keyword id="KW-0418">Kinase</keyword>
<keyword id="KW-0545">Nucleotide biosynthesis</keyword>
<keyword id="KW-0547">Nucleotide-binding</keyword>
<keyword id="KW-1185">Reference proteome</keyword>
<keyword id="KW-0808">Transferase</keyword>
<sequence length="210" mass="22960">MTGLFITLEGPEGAGKSTNRDYLAAQLRAQGVQVLLTREPGGTPLAERIRELLLAPSDEGMSADTELLLVFAARAQHLAEVIRPALARGEVVLCDRFTDATYAYQGGGRGLSHERIAALEQFVQGDLRPDLTLVFDLPVEIGLSRAAARGRLDRFEQEGRAFFDAVRSTYLNRAKAEPARYRLVDAAQSLADVQASLDKLLPELLELQRG</sequence>
<comment type="function">
    <text evidence="1">Phosphorylation of dTMP to form dTDP in both de novo and salvage pathways of dTTP synthesis.</text>
</comment>
<comment type="catalytic activity">
    <reaction evidence="1">
        <text>dTMP + ATP = dTDP + ADP</text>
        <dbReference type="Rhea" id="RHEA:13517"/>
        <dbReference type="ChEBI" id="CHEBI:30616"/>
        <dbReference type="ChEBI" id="CHEBI:58369"/>
        <dbReference type="ChEBI" id="CHEBI:63528"/>
        <dbReference type="ChEBI" id="CHEBI:456216"/>
        <dbReference type="EC" id="2.7.4.9"/>
    </reaction>
</comment>
<comment type="similarity">
    <text evidence="1">Belongs to the thymidylate kinase family.</text>
</comment>
<dbReference type="EC" id="2.7.4.9" evidence="1"/>
<dbReference type="EMBL" id="AE016853">
    <property type="protein sequence ID" value="AAO57295.1"/>
    <property type="molecule type" value="Genomic_DNA"/>
</dbReference>
<dbReference type="RefSeq" id="NP_793600.1">
    <property type="nucleotide sequence ID" value="NC_004578.1"/>
</dbReference>
<dbReference type="RefSeq" id="WP_005770616.1">
    <property type="nucleotide sequence ID" value="NC_004578.1"/>
</dbReference>
<dbReference type="SMR" id="Q87YH1"/>
<dbReference type="STRING" id="223283.PSPTO_3827"/>
<dbReference type="GeneID" id="1185498"/>
<dbReference type="KEGG" id="pst:PSPTO_3827"/>
<dbReference type="PATRIC" id="fig|223283.9.peg.3924"/>
<dbReference type="eggNOG" id="COG0125">
    <property type="taxonomic scope" value="Bacteria"/>
</dbReference>
<dbReference type="HOGENOM" id="CLU_049131_0_2_6"/>
<dbReference type="OrthoDB" id="9774907at2"/>
<dbReference type="PhylomeDB" id="Q87YH1"/>
<dbReference type="Proteomes" id="UP000002515">
    <property type="component" value="Chromosome"/>
</dbReference>
<dbReference type="GO" id="GO:0005829">
    <property type="term" value="C:cytosol"/>
    <property type="evidence" value="ECO:0007669"/>
    <property type="project" value="TreeGrafter"/>
</dbReference>
<dbReference type="GO" id="GO:0005524">
    <property type="term" value="F:ATP binding"/>
    <property type="evidence" value="ECO:0007669"/>
    <property type="project" value="UniProtKB-UniRule"/>
</dbReference>
<dbReference type="GO" id="GO:0004798">
    <property type="term" value="F:dTMP kinase activity"/>
    <property type="evidence" value="ECO:0007669"/>
    <property type="project" value="UniProtKB-UniRule"/>
</dbReference>
<dbReference type="GO" id="GO:0006233">
    <property type="term" value="P:dTDP biosynthetic process"/>
    <property type="evidence" value="ECO:0007669"/>
    <property type="project" value="InterPro"/>
</dbReference>
<dbReference type="GO" id="GO:0006235">
    <property type="term" value="P:dTTP biosynthetic process"/>
    <property type="evidence" value="ECO:0007669"/>
    <property type="project" value="UniProtKB-UniRule"/>
</dbReference>
<dbReference type="GO" id="GO:0006227">
    <property type="term" value="P:dUDP biosynthetic process"/>
    <property type="evidence" value="ECO:0007669"/>
    <property type="project" value="TreeGrafter"/>
</dbReference>
<dbReference type="CDD" id="cd01672">
    <property type="entry name" value="TMPK"/>
    <property type="match status" value="1"/>
</dbReference>
<dbReference type="FunFam" id="3.40.50.300:FF:000225">
    <property type="entry name" value="Thymidylate kinase"/>
    <property type="match status" value="1"/>
</dbReference>
<dbReference type="Gene3D" id="3.40.50.300">
    <property type="entry name" value="P-loop containing nucleotide triphosphate hydrolases"/>
    <property type="match status" value="1"/>
</dbReference>
<dbReference type="HAMAP" id="MF_00165">
    <property type="entry name" value="Thymidylate_kinase"/>
    <property type="match status" value="1"/>
</dbReference>
<dbReference type="InterPro" id="IPR027417">
    <property type="entry name" value="P-loop_NTPase"/>
</dbReference>
<dbReference type="InterPro" id="IPR039430">
    <property type="entry name" value="Thymidylate_kin-like_dom"/>
</dbReference>
<dbReference type="InterPro" id="IPR018094">
    <property type="entry name" value="Thymidylate_kinase"/>
</dbReference>
<dbReference type="NCBIfam" id="TIGR00041">
    <property type="entry name" value="DTMP_kinase"/>
    <property type="match status" value="1"/>
</dbReference>
<dbReference type="PANTHER" id="PTHR10344">
    <property type="entry name" value="THYMIDYLATE KINASE"/>
    <property type="match status" value="1"/>
</dbReference>
<dbReference type="PANTHER" id="PTHR10344:SF4">
    <property type="entry name" value="UMP-CMP KINASE 2, MITOCHONDRIAL"/>
    <property type="match status" value="1"/>
</dbReference>
<dbReference type="Pfam" id="PF02223">
    <property type="entry name" value="Thymidylate_kin"/>
    <property type="match status" value="1"/>
</dbReference>
<dbReference type="SUPFAM" id="SSF52540">
    <property type="entry name" value="P-loop containing nucleoside triphosphate hydrolases"/>
    <property type="match status" value="1"/>
</dbReference>
<protein>
    <recommendedName>
        <fullName evidence="1">Thymidylate kinase</fullName>
        <ecNumber evidence="1">2.7.4.9</ecNumber>
    </recommendedName>
    <alternativeName>
        <fullName evidence="1">dTMP kinase</fullName>
    </alternativeName>
</protein>
<name>KTHY_PSESM</name>
<organism>
    <name type="scientific">Pseudomonas syringae pv. tomato (strain ATCC BAA-871 / DC3000)</name>
    <dbReference type="NCBI Taxonomy" id="223283"/>
    <lineage>
        <taxon>Bacteria</taxon>
        <taxon>Pseudomonadati</taxon>
        <taxon>Pseudomonadota</taxon>
        <taxon>Gammaproteobacteria</taxon>
        <taxon>Pseudomonadales</taxon>
        <taxon>Pseudomonadaceae</taxon>
        <taxon>Pseudomonas</taxon>
    </lineage>
</organism>